<proteinExistence type="evidence at protein level"/>
<keyword id="KW-0067">ATP-binding</keyword>
<keyword id="KW-0418">Kinase</keyword>
<keyword id="KW-0460">Magnesium</keyword>
<keyword id="KW-0479">Metal-binding</keyword>
<keyword id="KW-0547">Nucleotide-binding</keyword>
<keyword id="KW-1185">Reference proteome</keyword>
<keyword id="KW-0808">Transferase</keyword>
<gene>
    <name evidence="6" type="ordered locus">Desmu_0904</name>
</gene>
<feature type="chain" id="PRO_0000461215" description="ATP-dependent L-serine kinase">
    <location>
        <begin position="1"/>
        <end position="255"/>
    </location>
</feature>
<feature type="active site" evidence="2">
    <location>
        <position position="36"/>
    </location>
</feature>
<feature type="binding site" evidence="2">
    <location>
        <position position="74"/>
    </location>
    <ligand>
        <name>O-phospho-L-serine</name>
        <dbReference type="ChEBI" id="CHEBI:57524"/>
    </ligand>
</feature>
<feature type="binding site" evidence="2">
    <location>
        <position position="75"/>
    </location>
    <ligand>
        <name>Mg(2+)</name>
        <dbReference type="ChEBI" id="CHEBI:18420"/>
    </ligand>
</feature>
<feature type="binding site" evidence="2">
    <location>
        <position position="76"/>
    </location>
    <ligand>
        <name>O-phospho-L-serine</name>
        <dbReference type="ChEBI" id="CHEBI:57524"/>
    </ligand>
</feature>
<feature type="binding site" evidence="2">
    <location>
        <position position="77"/>
    </location>
    <ligand>
        <name>O-phospho-L-serine</name>
        <dbReference type="ChEBI" id="CHEBI:57524"/>
    </ligand>
</feature>
<feature type="binding site" evidence="2">
    <location>
        <position position="78"/>
    </location>
    <ligand>
        <name>O-phospho-L-serine</name>
        <dbReference type="ChEBI" id="CHEBI:57524"/>
    </ligand>
</feature>
<feature type="binding site" evidence="2">
    <location>
        <position position="108"/>
    </location>
    <ligand>
        <name>O-phospho-L-serine</name>
        <dbReference type="ChEBI" id="CHEBI:57524"/>
    </ligand>
</feature>
<feature type="binding site" evidence="2">
    <location>
        <position position="234"/>
    </location>
    <ligand>
        <name>O-phospho-L-serine</name>
        <dbReference type="ChEBI" id="CHEBI:57524"/>
    </ligand>
</feature>
<feature type="binding site" evidence="2">
    <location>
        <position position="236"/>
    </location>
    <ligand>
        <name>O-phospho-L-serine</name>
        <dbReference type="ChEBI" id="CHEBI:57524"/>
    </ligand>
</feature>
<feature type="binding site" evidence="2">
    <location>
        <position position="238"/>
    </location>
    <ligand>
        <name>O-phospho-L-serine</name>
        <dbReference type="ChEBI" id="CHEBI:57524"/>
    </ligand>
</feature>
<protein>
    <recommendedName>
        <fullName evidence="4">ATP-dependent L-serine kinase</fullName>
        <ecNumber evidence="3">2.7.1.225</ecNumber>
    </recommendedName>
</protein>
<sequence length="255" mass="28710">MSSSTGKVIIKLPKTSIPYKYVEPVLIEVDKLVNHEELVDARLRELMDKIRSENAVDMPIVVTPIPGTDKYLIVDGHHRWAAVKALGYRKIPCIIIDYFSQDVKLKTWLPGIIGDVKPVLEEAARRGLGVAECRYSVDTSGDIDAKLLEESSFIVLGRDLCRAISGGVEGQKIVSQVLNELNMKGLFTLVYYGELSEALEDLKSGWLHYLFIRKSLTKEDVMRYVRNGGVYAPKTTRHILPFYPAKTYTPLDALR</sequence>
<reference key="1">
    <citation type="journal article" date="2011" name="Stand. Genomic Sci.">
        <title>Complete genome sequence of Desulfurococcus mucosus type strain (O7/1).</title>
        <authorList>
            <person name="Wirth R."/>
            <person name="Chertkov O."/>
            <person name="Held B."/>
            <person name="Lapidus A."/>
            <person name="Nolan M."/>
            <person name="Lucas S."/>
            <person name="Hammon N."/>
            <person name="Deshpande S."/>
            <person name="Cheng J.F."/>
            <person name="Tapia R."/>
            <person name="Han C."/>
            <person name="Goodwin L."/>
            <person name="Pitluck S."/>
            <person name="Liolios K."/>
            <person name="Ioanna P."/>
            <person name="Ivanova N."/>
            <person name="Mavromatis K."/>
            <person name="Mikhailova N."/>
            <person name="Pati A."/>
            <person name="Chen A."/>
            <person name="Palaniappan K."/>
            <person name="Land M."/>
            <person name="Hauser L."/>
            <person name="Chang Y.J."/>
            <person name="Jeffries C.D."/>
            <person name="Bilek Y."/>
            <person name="Hader T."/>
            <person name="Rohde M."/>
            <person name="Spring S."/>
            <person name="Sikorski J."/>
            <person name="Goker M."/>
            <person name="Woyke T."/>
            <person name="Bristow J."/>
            <person name="Eisen J.A."/>
            <person name="Markowitz V."/>
            <person name="Hugenholtz P."/>
            <person name="Kyrpides N.C."/>
            <person name="Klenk H.P."/>
        </authorList>
    </citation>
    <scope>NUCLEOTIDE SEQUENCE [LARGE SCALE GENOMIC DNA]</scope>
    <source>
        <strain>ATCC 35584 / DSM 2162 / JCM 9187 / O7/1</strain>
    </source>
</reference>
<reference key="2">
    <citation type="journal article" date="2021" name="J. Bacteriol.">
        <title>Identification and Enzymatic Analysis of an Archaeal ATP-Dependent Serine Kinase from the Hyperthermophilic Archaeon Staphylothermus marinus.</title>
        <authorList>
            <person name="Mori Y."/>
            <person name="Kawamura H."/>
            <person name="Sato T."/>
            <person name="Fujita T."/>
            <person name="Nagata R."/>
            <person name="Fujihashi M."/>
            <person name="Miki K."/>
            <person name="Atomi H."/>
        </authorList>
    </citation>
    <scope>FUNCTION</scope>
    <scope>CATALYTIC ACTIVITY</scope>
</reference>
<accession>E8R9N2</accession>
<name>SERK_DESM0</name>
<dbReference type="EC" id="2.7.1.225" evidence="3"/>
<dbReference type="EMBL" id="CP002363">
    <property type="protein sequence ID" value="ADV65208.1"/>
    <property type="molecule type" value="Genomic_DNA"/>
</dbReference>
<dbReference type="RefSeq" id="WP_013562430.1">
    <property type="nucleotide sequence ID" value="NC_014961.1"/>
</dbReference>
<dbReference type="SMR" id="E8R9N2"/>
<dbReference type="STRING" id="765177.Desmu_0904"/>
<dbReference type="GeneID" id="10153602"/>
<dbReference type="KEGG" id="dmu:Desmu_0904"/>
<dbReference type="eggNOG" id="arCOG01875">
    <property type="taxonomic scope" value="Archaea"/>
</dbReference>
<dbReference type="HOGENOM" id="CLU_1088213_0_0_2"/>
<dbReference type="OrthoDB" id="89900at2157"/>
<dbReference type="Proteomes" id="UP000001068">
    <property type="component" value="Chromosome"/>
</dbReference>
<dbReference type="GO" id="GO:0005694">
    <property type="term" value="C:chromosome"/>
    <property type="evidence" value="ECO:0007669"/>
    <property type="project" value="TreeGrafter"/>
</dbReference>
<dbReference type="GO" id="GO:0005524">
    <property type="term" value="F:ATP binding"/>
    <property type="evidence" value="ECO:0007669"/>
    <property type="project" value="UniProtKB-KW"/>
</dbReference>
<dbReference type="GO" id="GO:0016301">
    <property type="term" value="F:kinase activity"/>
    <property type="evidence" value="ECO:0007669"/>
    <property type="project" value="UniProtKB-KW"/>
</dbReference>
<dbReference type="GO" id="GO:0046872">
    <property type="term" value="F:metal ion binding"/>
    <property type="evidence" value="ECO:0007669"/>
    <property type="project" value="UniProtKB-KW"/>
</dbReference>
<dbReference type="GO" id="GO:0007059">
    <property type="term" value="P:chromosome segregation"/>
    <property type="evidence" value="ECO:0007669"/>
    <property type="project" value="TreeGrafter"/>
</dbReference>
<dbReference type="GO" id="GO:0045881">
    <property type="term" value="P:positive regulation of sporulation resulting in formation of a cellular spore"/>
    <property type="evidence" value="ECO:0007669"/>
    <property type="project" value="TreeGrafter"/>
</dbReference>
<dbReference type="CDD" id="cd16400">
    <property type="entry name" value="ParB_Srx_like_nuclease"/>
    <property type="match status" value="1"/>
</dbReference>
<dbReference type="Gene3D" id="3.30.1760.10">
    <property type="entry name" value="Conserved hypothetical protein from pyrococcus furiosus pfu- 392566-001, domain 2"/>
    <property type="match status" value="1"/>
</dbReference>
<dbReference type="Gene3D" id="3.90.1530.10">
    <property type="entry name" value="Conserved hypothetical protein from pyrococcus furiosus pfu- 392566-001, ParB domain"/>
    <property type="match status" value="1"/>
</dbReference>
<dbReference type="InterPro" id="IPR050336">
    <property type="entry name" value="Chromosome_partition/occlusion"/>
</dbReference>
<dbReference type="InterPro" id="IPR003115">
    <property type="entry name" value="ParB/Sulfiredoxin_dom"/>
</dbReference>
<dbReference type="InterPro" id="IPR036086">
    <property type="entry name" value="ParB/Sulfiredoxin_sf"/>
</dbReference>
<dbReference type="InterPro" id="IPR023098">
    <property type="entry name" value="SerK/SbnI_C"/>
</dbReference>
<dbReference type="InterPro" id="IPR040867">
    <property type="entry name" value="SerK_C"/>
</dbReference>
<dbReference type="PANTHER" id="PTHR33375">
    <property type="entry name" value="CHROMOSOME-PARTITIONING PROTEIN PARB-RELATED"/>
    <property type="match status" value="1"/>
</dbReference>
<dbReference type="PANTHER" id="PTHR33375:SF1">
    <property type="entry name" value="CHROMOSOME-PARTITIONING PROTEIN PARB-RELATED"/>
    <property type="match status" value="1"/>
</dbReference>
<dbReference type="Pfam" id="PF02195">
    <property type="entry name" value="ParBc"/>
    <property type="match status" value="1"/>
</dbReference>
<dbReference type="Pfam" id="PF18231">
    <property type="entry name" value="SerK_C"/>
    <property type="match status" value="1"/>
</dbReference>
<dbReference type="SMART" id="SM00470">
    <property type="entry name" value="ParB"/>
    <property type="match status" value="1"/>
</dbReference>
<dbReference type="SUPFAM" id="SSF110849">
    <property type="entry name" value="ParB/Sulfiredoxin"/>
    <property type="match status" value="1"/>
</dbReference>
<evidence type="ECO:0000250" key="1">
    <source>
        <dbReference type="UniProtKB" id="A3DM02"/>
    </source>
</evidence>
<evidence type="ECO:0000250" key="2">
    <source>
        <dbReference type="UniProtKB" id="Q5JD03"/>
    </source>
</evidence>
<evidence type="ECO:0000269" key="3">
    <source>
    </source>
</evidence>
<evidence type="ECO:0000303" key="4">
    <source>
    </source>
</evidence>
<evidence type="ECO:0000305" key="5"/>
<evidence type="ECO:0000312" key="6">
    <source>
        <dbReference type="EMBL" id="ADV65208.1"/>
    </source>
</evidence>
<organism>
    <name type="scientific">Desulfurococcus mucosus (strain ATCC 35584 / DSM 2162 / JCM 9187 / O7/1)</name>
    <dbReference type="NCBI Taxonomy" id="765177"/>
    <lineage>
        <taxon>Archaea</taxon>
        <taxon>Thermoproteota</taxon>
        <taxon>Thermoprotei</taxon>
        <taxon>Desulfurococcales</taxon>
        <taxon>Desulfurococcaceae</taxon>
        <taxon>Desulfurococcus</taxon>
    </lineage>
</organism>
<comment type="function">
    <text evidence="3">Free serine kinase that uses ATP to phosphorylate L-serine to yield O-phospho-L-serine and ADP.</text>
</comment>
<comment type="catalytic activity">
    <reaction evidence="3">
        <text>L-serine + ATP = O-phospho-L-serine + ADP + H(+)</text>
        <dbReference type="Rhea" id="RHEA:59112"/>
        <dbReference type="ChEBI" id="CHEBI:15378"/>
        <dbReference type="ChEBI" id="CHEBI:30616"/>
        <dbReference type="ChEBI" id="CHEBI:33384"/>
        <dbReference type="ChEBI" id="CHEBI:57524"/>
        <dbReference type="ChEBI" id="CHEBI:456216"/>
        <dbReference type="EC" id="2.7.1.225"/>
    </reaction>
</comment>
<comment type="cofactor">
    <cofactor evidence="1">
        <name>Mg(2+)</name>
        <dbReference type="ChEBI" id="CHEBI:18420"/>
    </cofactor>
</comment>
<comment type="similarity">
    <text evidence="5">Belongs to the SerK family.</text>
</comment>